<sequence length="113" mass="12971">MKITLSKRIGLLAFLLPCALALSTTVHAETNKLVIESGDSAQSRQHAAMEKEQWNDTRNLRRKVNKRTEKEWDKADAAFDNRDKCEQSANINAYWEPNTLRCLDRRTGRVITP</sequence>
<feature type="signal peptide" evidence="1">
    <location>
        <begin position="1"/>
        <end position="28"/>
    </location>
</feature>
<feature type="chain" id="PRO_0000300230" description="UPF0482 protein YnfB">
    <location>
        <begin position="29"/>
        <end position="113"/>
    </location>
</feature>
<comment type="similarity">
    <text evidence="1">Belongs to the UPF0482 family.</text>
</comment>
<protein>
    <recommendedName>
        <fullName evidence="1">UPF0482 protein YnfB</fullName>
    </recommendedName>
</protein>
<evidence type="ECO:0000255" key="1">
    <source>
        <dbReference type="HAMAP-Rule" id="MF_01581"/>
    </source>
</evidence>
<gene>
    <name evidence="1" type="primary">ynfB</name>
    <name type="ordered locus">SDY_1576</name>
</gene>
<accession>Q32G47</accession>
<reference key="1">
    <citation type="journal article" date="2005" name="Nucleic Acids Res.">
        <title>Genome dynamics and diversity of Shigella species, the etiologic agents of bacillary dysentery.</title>
        <authorList>
            <person name="Yang F."/>
            <person name="Yang J."/>
            <person name="Zhang X."/>
            <person name="Chen L."/>
            <person name="Jiang Y."/>
            <person name="Yan Y."/>
            <person name="Tang X."/>
            <person name="Wang J."/>
            <person name="Xiong Z."/>
            <person name="Dong J."/>
            <person name="Xue Y."/>
            <person name="Zhu Y."/>
            <person name="Xu X."/>
            <person name="Sun L."/>
            <person name="Chen S."/>
            <person name="Nie H."/>
            <person name="Peng J."/>
            <person name="Xu J."/>
            <person name="Wang Y."/>
            <person name="Yuan Z."/>
            <person name="Wen Y."/>
            <person name="Yao Z."/>
            <person name="Shen Y."/>
            <person name="Qiang B."/>
            <person name="Hou Y."/>
            <person name="Yu J."/>
            <person name="Jin Q."/>
        </authorList>
    </citation>
    <scope>NUCLEOTIDE SEQUENCE [LARGE SCALE GENOMIC DNA]</scope>
    <source>
        <strain>Sd197</strain>
    </source>
</reference>
<name>YNFB_SHIDS</name>
<keyword id="KW-1185">Reference proteome</keyword>
<keyword id="KW-0732">Signal</keyword>
<proteinExistence type="inferred from homology"/>
<dbReference type="EMBL" id="CP000034">
    <property type="protein sequence ID" value="ABB61708.1"/>
    <property type="molecule type" value="Genomic_DNA"/>
</dbReference>
<dbReference type="RefSeq" id="WP_000705200.1">
    <property type="nucleotide sequence ID" value="NC_007606.1"/>
</dbReference>
<dbReference type="RefSeq" id="YP_403199.1">
    <property type="nucleotide sequence ID" value="NC_007606.1"/>
</dbReference>
<dbReference type="STRING" id="300267.SDY_1576"/>
<dbReference type="EnsemblBacteria" id="ABB61708">
    <property type="protein sequence ID" value="ABB61708"/>
    <property type="gene ID" value="SDY_1576"/>
</dbReference>
<dbReference type="KEGG" id="sdy:SDY_1576"/>
<dbReference type="PATRIC" id="fig|300267.13.peg.1892"/>
<dbReference type="HOGENOM" id="CLU_167574_0_0_6"/>
<dbReference type="Proteomes" id="UP000002716">
    <property type="component" value="Chromosome"/>
</dbReference>
<dbReference type="HAMAP" id="MF_01581">
    <property type="entry name" value="UPF0482"/>
    <property type="match status" value="1"/>
</dbReference>
<dbReference type="InterPro" id="IPR009700">
    <property type="entry name" value="DUF1283"/>
</dbReference>
<dbReference type="NCBIfam" id="NF010180">
    <property type="entry name" value="PRK13659.1"/>
    <property type="match status" value="1"/>
</dbReference>
<dbReference type="Pfam" id="PF06932">
    <property type="entry name" value="DUF1283"/>
    <property type="match status" value="1"/>
</dbReference>
<organism>
    <name type="scientific">Shigella dysenteriae serotype 1 (strain Sd197)</name>
    <dbReference type="NCBI Taxonomy" id="300267"/>
    <lineage>
        <taxon>Bacteria</taxon>
        <taxon>Pseudomonadati</taxon>
        <taxon>Pseudomonadota</taxon>
        <taxon>Gammaproteobacteria</taxon>
        <taxon>Enterobacterales</taxon>
        <taxon>Enterobacteriaceae</taxon>
        <taxon>Shigella</taxon>
    </lineage>
</organism>